<proteinExistence type="inferred from homology"/>
<accession>B3CM65</accession>
<reference key="1">
    <citation type="journal article" date="2008" name="Mol. Biol. Evol.">
        <title>Genome evolution of Wolbachia strain wPip from the Culex pipiens group.</title>
        <authorList>
            <person name="Klasson L."/>
            <person name="Walker T."/>
            <person name="Sebaihia M."/>
            <person name="Sanders M.J."/>
            <person name="Quail M.A."/>
            <person name="Lord A."/>
            <person name="Sanders S."/>
            <person name="Earl J."/>
            <person name="O'Neill S.L."/>
            <person name="Thomson N."/>
            <person name="Sinkins S.P."/>
            <person name="Parkhill J."/>
        </authorList>
    </citation>
    <scope>NUCLEOTIDE SEQUENCE [LARGE SCALE GENOMIC DNA]</scope>
    <source>
        <strain>wPip</strain>
    </source>
</reference>
<feature type="chain" id="PRO_1000198595" description="tRNA (guanine-N(1)-)-methyltransferase">
    <location>
        <begin position="1"/>
        <end position="232"/>
    </location>
</feature>
<feature type="binding site" evidence="1">
    <location>
        <position position="114"/>
    </location>
    <ligand>
        <name>S-adenosyl-L-methionine</name>
        <dbReference type="ChEBI" id="CHEBI:59789"/>
    </ligand>
</feature>
<feature type="binding site" evidence="1">
    <location>
        <begin position="134"/>
        <end position="139"/>
    </location>
    <ligand>
        <name>S-adenosyl-L-methionine</name>
        <dbReference type="ChEBI" id="CHEBI:59789"/>
    </ligand>
</feature>
<comment type="function">
    <text evidence="1">Specifically methylates guanosine-37 in various tRNAs.</text>
</comment>
<comment type="catalytic activity">
    <reaction evidence="1">
        <text>guanosine(37) in tRNA + S-adenosyl-L-methionine = N(1)-methylguanosine(37) in tRNA + S-adenosyl-L-homocysteine + H(+)</text>
        <dbReference type="Rhea" id="RHEA:36899"/>
        <dbReference type="Rhea" id="RHEA-COMP:10145"/>
        <dbReference type="Rhea" id="RHEA-COMP:10147"/>
        <dbReference type="ChEBI" id="CHEBI:15378"/>
        <dbReference type="ChEBI" id="CHEBI:57856"/>
        <dbReference type="ChEBI" id="CHEBI:59789"/>
        <dbReference type="ChEBI" id="CHEBI:73542"/>
        <dbReference type="ChEBI" id="CHEBI:74269"/>
        <dbReference type="EC" id="2.1.1.228"/>
    </reaction>
</comment>
<comment type="subunit">
    <text evidence="1">Homodimer.</text>
</comment>
<comment type="subcellular location">
    <subcellularLocation>
        <location evidence="1">Cytoplasm</location>
    </subcellularLocation>
</comment>
<comment type="similarity">
    <text evidence="1">Belongs to the RNA methyltransferase TrmD family.</text>
</comment>
<keyword id="KW-0963">Cytoplasm</keyword>
<keyword id="KW-0489">Methyltransferase</keyword>
<keyword id="KW-0949">S-adenosyl-L-methionine</keyword>
<keyword id="KW-0808">Transferase</keyword>
<keyword id="KW-0819">tRNA processing</keyword>
<evidence type="ECO:0000255" key="1">
    <source>
        <dbReference type="HAMAP-Rule" id="MF_00605"/>
    </source>
</evidence>
<protein>
    <recommendedName>
        <fullName evidence="1">tRNA (guanine-N(1)-)-methyltransferase</fullName>
        <ecNumber evidence="1">2.1.1.228</ecNumber>
    </recommendedName>
    <alternativeName>
        <fullName evidence="1">M1G-methyltransferase</fullName>
    </alternativeName>
    <alternativeName>
        <fullName evidence="1">tRNA [GM37] methyltransferase</fullName>
    </alternativeName>
</protein>
<dbReference type="EC" id="2.1.1.228" evidence="1"/>
<dbReference type="EMBL" id="AM999887">
    <property type="protein sequence ID" value="CAQ54984.1"/>
    <property type="molecule type" value="Genomic_DNA"/>
</dbReference>
<dbReference type="RefSeq" id="WP_012481936.1">
    <property type="nucleotide sequence ID" value="NC_010981.1"/>
</dbReference>
<dbReference type="SMR" id="B3CM65"/>
<dbReference type="KEGG" id="wpi:WP0876"/>
<dbReference type="eggNOG" id="COG0336">
    <property type="taxonomic scope" value="Bacteria"/>
</dbReference>
<dbReference type="HOGENOM" id="CLU_047363_0_1_5"/>
<dbReference type="Proteomes" id="UP000008814">
    <property type="component" value="Chromosome"/>
</dbReference>
<dbReference type="GO" id="GO:0005829">
    <property type="term" value="C:cytosol"/>
    <property type="evidence" value="ECO:0007669"/>
    <property type="project" value="TreeGrafter"/>
</dbReference>
<dbReference type="GO" id="GO:0052906">
    <property type="term" value="F:tRNA (guanine(37)-N1)-methyltransferase activity"/>
    <property type="evidence" value="ECO:0007669"/>
    <property type="project" value="UniProtKB-UniRule"/>
</dbReference>
<dbReference type="GO" id="GO:0002939">
    <property type="term" value="P:tRNA N1-guanine methylation"/>
    <property type="evidence" value="ECO:0007669"/>
    <property type="project" value="TreeGrafter"/>
</dbReference>
<dbReference type="CDD" id="cd18080">
    <property type="entry name" value="TrmD-like"/>
    <property type="match status" value="1"/>
</dbReference>
<dbReference type="FunFam" id="3.40.1280.10:FF:000001">
    <property type="entry name" value="tRNA (guanine-N(1)-)-methyltransferase"/>
    <property type="match status" value="1"/>
</dbReference>
<dbReference type="Gene3D" id="3.40.1280.10">
    <property type="match status" value="1"/>
</dbReference>
<dbReference type="Gene3D" id="1.10.1270.20">
    <property type="entry name" value="tRNA(m1g37)methyltransferase, domain 2"/>
    <property type="match status" value="1"/>
</dbReference>
<dbReference type="HAMAP" id="MF_00605">
    <property type="entry name" value="TrmD"/>
    <property type="match status" value="1"/>
</dbReference>
<dbReference type="InterPro" id="IPR029028">
    <property type="entry name" value="Alpha/beta_knot_MTases"/>
</dbReference>
<dbReference type="InterPro" id="IPR023148">
    <property type="entry name" value="tRNA_m1G_MeTrfase_C_sf"/>
</dbReference>
<dbReference type="InterPro" id="IPR002649">
    <property type="entry name" value="tRNA_m1G_MeTrfase_TrmD"/>
</dbReference>
<dbReference type="InterPro" id="IPR029026">
    <property type="entry name" value="tRNA_m1G_MTases_N"/>
</dbReference>
<dbReference type="InterPro" id="IPR016009">
    <property type="entry name" value="tRNA_MeTrfase_TRMD/TRM10"/>
</dbReference>
<dbReference type="NCBIfam" id="NF000648">
    <property type="entry name" value="PRK00026.1"/>
    <property type="match status" value="1"/>
</dbReference>
<dbReference type="NCBIfam" id="TIGR00088">
    <property type="entry name" value="trmD"/>
    <property type="match status" value="1"/>
</dbReference>
<dbReference type="PANTHER" id="PTHR46417">
    <property type="entry name" value="TRNA (GUANINE-N(1)-)-METHYLTRANSFERASE"/>
    <property type="match status" value="1"/>
</dbReference>
<dbReference type="PANTHER" id="PTHR46417:SF1">
    <property type="entry name" value="TRNA (GUANINE-N(1)-)-METHYLTRANSFERASE"/>
    <property type="match status" value="1"/>
</dbReference>
<dbReference type="Pfam" id="PF01746">
    <property type="entry name" value="tRNA_m1G_MT"/>
    <property type="match status" value="1"/>
</dbReference>
<dbReference type="PIRSF" id="PIRSF000386">
    <property type="entry name" value="tRNA_mtase"/>
    <property type="match status" value="1"/>
</dbReference>
<dbReference type="SUPFAM" id="SSF75217">
    <property type="entry name" value="alpha/beta knot"/>
    <property type="match status" value="1"/>
</dbReference>
<gene>
    <name evidence="1" type="primary">trmD</name>
    <name type="ordered locus">WP0876</name>
</gene>
<name>TRMD_WOLPP</name>
<organism>
    <name type="scientific">Wolbachia pipientis subsp. Culex pipiens (strain wPip)</name>
    <dbReference type="NCBI Taxonomy" id="570417"/>
    <lineage>
        <taxon>Bacteria</taxon>
        <taxon>Pseudomonadati</taxon>
        <taxon>Pseudomonadota</taxon>
        <taxon>Alphaproteobacteria</taxon>
        <taxon>Rickettsiales</taxon>
        <taxon>Anaplasmataceae</taxon>
        <taxon>Wolbachieae</taxon>
        <taxon>Wolbachia</taxon>
    </lineage>
</organism>
<sequence>MTFSVTILTIFPEMFPGFLNYSLAGKALEKKIWNLEIVNIRSFAKDKHSTVDDVPYGGGAGMVMRPDVIGNAVDNVLSAHKNTRFIYMTPSGTKFNQRIAKELTEIPHVTILCGRFEGVDQRVIDVYTPYELSIGDYILSGGEPAAMVVLDACIRLLPGVVNNFDSVAEESFSYSGGILEYPQYTRPEQWSRYKVPEVLLSGNHRKISDWRREQSYVRTKERRPELLNGDDK</sequence>